<proteinExistence type="inferred from homology"/>
<keyword id="KW-0963">Cytoplasm</keyword>
<accession>B7NBM5</accession>
<feature type="chain" id="PRO_1000133835" description="PF03932 family protein CutC">
    <location>
        <begin position="1"/>
        <end position="248"/>
    </location>
</feature>
<evidence type="ECO:0000255" key="1">
    <source>
        <dbReference type="HAMAP-Rule" id="MF_00795"/>
    </source>
</evidence>
<dbReference type="EMBL" id="CU928163">
    <property type="protein sequence ID" value="CAR13365.1"/>
    <property type="molecule type" value="Genomic_DNA"/>
</dbReference>
<dbReference type="RefSeq" id="WP_001185724.1">
    <property type="nucleotide sequence ID" value="NC_011751.1"/>
</dbReference>
<dbReference type="RefSeq" id="YP_002412894.1">
    <property type="nucleotide sequence ID" value="NC_011751.1"/>
</dbReference>
<dbReference type="SMR" id="B7NBM5"/>
<dbReference type="STRING" id="585056.ECUMN_2172"/>
<dbReference type="KEGG" id="eum:ECUMN_2172"/>
<dbReference type="PATRIC" id="fig|585056.7.peg.2357"/>
<dbReference type="HOGENOM" id="CLU_050555_3_1_6"/>
<dbReference type="Proteomes" id="UP000007097">
    <property type="component" value="Chromosome"/>
</dbReference>
<dbReference type="GO" id="GO:0005737">
    <property type="term" value="C:cytoplasm"/>
    <property type="evidence" value="ECO:0007669"/>
    <property type="project" value="UniProtKB-SubCell"/>
</dbReference>
<dbReference type="GO" id="GO:0005507">
    <property type="term" value="F:copper ion binding"/>
    <property type="evidence" value="ECO:0007669"/>
    <property type="project" value="TreeGrafter"/>
</dbReference>
<dbReference type="FunFam" id="3.20.20.380:FF:000001">
    <property type="entry name" value="Copper homeostasis protein CutC"/>
    <property type="match status" value="1"/>
</dbReference>
<dbReference type="Gene3D" id="3.20.20.380">
    <property type="entry name" value="Copper homeostasis (CutC) domain"/>
    <property type="match status" value="1"/>
</dbReference>
<dbReference type="HAMAP" id="MF_00795">
    <property type="entry name" value="CutC"/>
    <property type="match status" value="1"/>
</dbReference>
<dbReference type="InterPro" id="IPR005627">
    <property type="entry name" value="CutC-like"/>
</dbReference>
<dbReference type="InterPro" id="IPR036822">
    <property type="entry name" value="CutC-like_dom_sf"/>
</dbReference>
<dbReference type="NCBIfam" id="NF008603">
    <property type="entry name" value="PRK11572.1"/>
    <property type="match status" value="1"/>
</dbReference>
<dbReference type="PANTHER" id="PTHR12598">
    <property type="entry name" value="COPPER HOMEOSTASIS PROTEIN CUTC"/>
    <property type="match status" value="1"/>
</dbReference>
<dbReference type="PANTHER" id="PTHR12598:SF0">
    <property type="entry name" value="COPPER HOMEOSTASIS PROTEIN CUTC HOMOLOG"/>
    <property type="match status" value="1"/>
</dbReference>
<dbReference type="Pfam" id="PF03932">
    <property type="entry name" value="CutC"/>
    <property type="match status" value="1"/>
</dbReference>
<dbReference type="SUPFAM" id="SSF110395">
    <property type="entry name" value="CutC-like"/>
    <property type="match status" value="1"/>
</dbReference>
<gene>
    <name evidence="1" type="primary">cutC</name>
    <name type="ordered locus">ECUMN_2172</name>
</gene>
<sequence>MALLEICCYSMECALTAQQNGADRVELCAAPKEGGLTPSLGVLKSVRQRVTIPVHPIIRPRGGDFCYSDGEFAAILEDVRTVRELGFPGLVTGVLDVDGNVDMPRMEKIMAAAGPLAVTFHRAFDMCANPLNTLNNLAEFGVARVLTSGQKSDALQGLSKIMELIAHGDAPIIMAGAGVRAENLHHFLDAGVLEVHSSAGAWQASPMRYRNQGLSMSSDAHADEYSRYVVDGAAVAEMKGIIERHQAK</sequence>
<comment type="subunit">
    <text evidence="1">Homodimer.</text>
</comment>
<comment type="subcellular location">
    <subcellularLocation>
        <location evidence="1">Cytoplasm</location>
    </subcellularLocation>
</comment>
<comment type="similarity">
    <text evidence="1">Belongs to the CutC family.</text>
</comment>
<comment type="caution">
    <text evidence="1">Once thought to be involved in copper homeostasis, experiments in E.coli have shown this is not the case.</text>
</comment>
<protein>
    <recommendedName>
        <fullName evidence="1">PF03932 family protein CutC</fullName>
    </recommendedName>
</protein>
<organism>
    <name type="scientific">Escherichia coli O17:K52:H18 (strain UMN026 / ExPEC)</name>
    <dbReference type="NCBI Taxonomy" id="585056"/>
    <lineage>
        <taxon>Bacteria</taxon>
        <taxon>Pseudomonadati</taxon>
        <taxon>Pseudomonadota</taxon>
        <taxon>Gammaproteobacteria</taxon>
        <taxon>Enterobacterales</taxon>
        <taxon>Enterobacteriaceae</taxon>
        <taxon>Escherichia</taxon>
    </lineage>
</organism>
<reference key="1">
    <citation type="journal article" date="2009" name="PLoS Genet.">
        <title>Organised genome dynamics in the Escherichia coli species results in highly diverse adaptive paths.</title>
        <authorList>
            <person name="Touchon M."/>
            <person name="Hoede C."/>
            <person name="Tenaillon O."/>
            <person name="Barbe V."/>
            <person name="Baeriswyl S."/>
            <person name="Bidet P."/>
            <person name="Bingen E."/>
            <person name="Bonacorsi S."/>
            <person name="Bouchier C."/>
            <person name="Bouvet O."/>
            <person name="Calteau A."/>
            <person name="Chiapello H."/>
            <person name="Clermont O."/>
            <person name="Cruveiller S."/>
            <person name="Danchin A."/>
            <person name="Diard M."/>
            <person name="Dossat C."/>
            <person name="Karoui M.E."/>
            <person name="Frapy E."/>
            <person name="Garry L."/>
            <person name="Ghigo J.M."/>
            <person name="Gilles A.M."/>
            <person name="Johnson J."/>
            <person name="Le Bouguenec C."/>
            <person name="Lescat M."/>
            <person name="Mangenot S."/>
            <person name="Martinez-Jehanne V."/>
            <person name="Matic I."/>
            <person name="Nassif X."/>
            <person name="Oztas S."/>
            <person name="Petit M.A."/>
            <person name="Pichon C."/>
            <person name="Rouy Z."/>
            <person name="Ruf C.S."/>
            <person name="Schneider D."/>
            <person name="Tourret J."/>
            <person name="Vacherie B."/>
            <person name="Vallenet D."/>
            <person name="Medigue C."/>
            <person name="Rocha E.P.C."/>
            <person name="Denamur E."/>
        </authorList>
    </citation>
    <scope>NUCLEOTIDE SEQUENCE [LARGE SCALE GENOMIC DNA]</scope>
    <source>
        <strain>UMN026 / ExPEC</strain>
    </source>
</reference>
<name>CUTC_ECOLU</name>